<dbReference type="EMBL" id="CP000606">
    <property type="protein sequence ID" value="ABO24498.1"/>
    <property type="molecule type" value="Genomic_DNA"/>
</dbReference>
<dbReference type="RefSeq" id="WP_011866429.1">
    <property type="nucleotide sequence ID" value="NC_009092.1"/>
</dbReference>
<dbReference type="SMR" id="A3QGA0"/>
<dbReference type="STRING" id="323850.Shew_2632"/>
<dbReference type="KEGG" id="slo:Shew_2632"/>
<dbReference type="eggNOG" id="COG0233">
    <property type="taxonomic scope" value="Bacteria"/>
</dbReference>
<dbReference type="HOGENOM" id="CLU_073981_2_1_6"/>
<dbReference type="OrthoDB" id="9804006at2"/>
<dbReference type="Proteomes" id="UP000001558">
    <property type="component" value="Chromosome"/>
</dbReference>
<dbReference type="GO" id="GO:0005829">
    <property type="term" value="C:cytosol"/>
    <property type="evidence" value="ECO:0007669"/>
    <property type="project" value="GOC"/>
</dbReference>
<dbReference type="GO" id="GO:0043023">
    <property type="term" value="F:ribosomal large subunit binding"/>
    <property type="evidence" value="ECO:0007669"/>
    <property type="project" value="TreeGrafter"/>
</dbReference>
<dbReference type="GO" id="GO:0002184">
    <property type="term" value="P:cytoplasmic translational termination"/>
    <property type="evidence" value="ECO:0007669"/>
    <property type="project" value="TreeGrafter"/>
</dbReference>
<dbReference type="CDD" id="cd00520">
    <property type="entry name" value="RRF"/>
    <property type="match status" value="1"/>
</dbReference>
<dbReference type="FunFam" id="1.10.132.20:FF:000001">
    <property type="entry name" value="Ribosome-recycling factor"/>
    <property type="match status" value="1"/>
</dbReference>
<dbReference type="FunFam" id="3.30.1360.40:FF:000001">
    <property type="entry name" value="Ribosome-recycling factor"/>
    <property type="match status" value="1"/>
</dbReference>
<dbReference type="Gene3D" id="3.30.1360.40">
    <property type="match status" value="1"/>
</dbReference>
<dbReference type="Gene3D" id="1.10.132.20">
    <property type="entry name" value="Ribosome-recycling factor"/>
    <property type="match status" value="1"/>
</dbReference>
<dbReference type="HAMAP" id="MF_00040">
    <property type="entry name" value="RRF"/>
    <property type="match status" value="1"/>
</dbReference>
<dbReference type="InterPro" id="IPR002661">
    <property type="entry name" value="Ribosome_recyc_fac"/>
</dbReference>
<dbReference type="InterPro" id="IPR023584">
    <property type="entry name" value="Ribosome_recyc_fac_dom"/>
</dbReference>
<dbReference type="InterPro" id="IPR036191">
    <property type="entry name" value="RRF_sf"/>
</dbReference>
<dbReference type="NCBIfam" id="TIGR00496">
    <property type="entry name" value="frr"/>
    <property type="match status" value="1"/>
</dbReference>
<dbReference type="PANTHER" id="PTHR20982:SF3">
    <property type="entry name" value="MITOCHONDRIAL RIBOSOME RECYCLING FACTOR PSEUDO 1"/>
    <property type="match status" value="1"/>
</dbReference>
<dbReference type="PANTHER" id="PTHR20982">
    <property type="entry name" value="RIBOSOME RECYCLING FACTOR"/>
    <property type="match status" value="1"/>
</dbReference>
<dbReference type="Pfam" id="PF01765">
    <property type="entry name" value="RRF"/>
    <property type="match status" value="1"/>
</dbReference>
<dbReference type="SUPFAM" id="SSF55194">
    <property type="entry name" value="Ribosome recycling factor, RRF"/>
    <property type="match status" value="1"/>
</dbReference>
<sequence length="185" mass="20652">MINEIKEDAKSRMAKCVEATKNQMAKVRTGRAHPSLLDSIKVPYYGTPTPLKQVGNVSIEDSRTLAITVFDTTMIAAVEKAIMSSDLGLNPMSAGTTIRIPLPALTEERRKDLIKVVRAEAENGRIAVRNVRRDANSDVKALEKEKECTEDDVRRTEDEIQKFTDAHIKQIDEILTAKEAELMEV</sequence>
<proteinExistence type="inferred from homology"/>
<evidence type="ECO:0000255" key="1">
    <source>
        <dbReference type="HAMAP-Rule" id="MF_00040"/>
    </source>
</evidence>
<protein>
    <recommendedName>
        <fullName evidence="1">Ribosome-recycling factor</fullName>
        <shortName evidence="1">RRF</shortName>
    </recommendedName>
    <alternativeName>
        <fullName evidence="1">Ribosome-releasing factor</fullName>
    </alternativeName>
</protein>
<accession>A3QGA0</accession>
<gene>
    <name evidence="1" type="primary">frr</name>
    <name type="ordered locus">Shew_2632</name>
</gene>
<organism>
    <name type="scientific">Shewanella loihica (strain ATCC BAA-1088 / PV-4)</name>
    <dbReference type="NCBI Taxonomy" id="323850"/>
    <lineage>
        <taxon>Bacteria</taxon>
        <taxon>Pseudomonadati</taxon>
        <taxon>Pseudomonadota</taxon>
        <taxon>Gammaproteobacteria</taxon>
        <taxon>Alteromonadales</taxon>
        <taxon>Shewanellaceae</taxon>
        <taxon>Shewanella</taxon>
    </lineage>
</organism>
<feature type="chain" id="PRO_1000003260" description="Ribosome-recycling factor">
    <location>
        <begin position="1"/>
        <end position="185"/>
    </location>
</feature>
<name>RRF_SHELP</name>
<comment type="function">
    <text evidence="1">Responsible for the release of ribosomes from messenger RNA at the termination of protein biosynthesis. May increase the efficiency of translation by recycling ribosomes from one round of translation to another.</text>
</comment>
<comment type="subcellular location">
    <subcellularLocation>
        <location evidence="1">Cytoplasm</location>
    </subcellularLocation>
</comment>
<comment type="similarity">
    <text evidence="1">Belongs to the RRF family.</text>
</comment>
<keyword id="KW-0963">Cytoplasm</keyword>
<keyword id="KW-0648">Protein biosynthesis</keyword>
<keyword id="KW-1185">Reference proteome</keyword>
<reference key="1">
    <citation type="submission" date="2007-03" db="EMBL/GenBank/DDBJ databases">
        <title>Complete sequence of Shewanella loihica PV-4.</title>
        <authorList>
            <consortium name="US DOE Joint Genome Institute"/>
            <person name="Copeland A."/>
            <person name="Lucas S."/>
            <person name="Lapidus A."/>
            <person name="Barry K."/>
            <person name="Detter J.C."/>
            <person name="Glavina del Rio T."/>
            <person name="Hammon N."/>
            <person name="Israni S."/>
            <person name="Dalin E."/>
            <person name="Tice H."/>
            <person name="Pitluck S."/>
            <person name="Chain P."/>
            <person name="Malfatti S."/>
            <person name="Shin M."/>
            <person name="Vergez L."/>
            <person name="Schmutz J."/>
            <person name="Larimer F."/>
            <person name="Land M."/>
            <person name="Hauser L."/>
            <person name="Kyrpides N."/>
            <person name="Mikhailova N."/>
            <person name="Romine M.F."/>
            <person name="Serres G."/>
            <person name="Fredrickson J."/>
            <person name="Tiedje J."/>
            <person name="Richardson P."/>
        </authorList>
    </citation>
    <scope>NUCLEOTIDE SEQUENCE [LARGE SCALE GENOMIC DNA]</scope>
    <source>
        <strain>ATCC BAA-1088 / PV-4</strain>
    </source>
</reference>